<name>GLMU_SALCH</name>
<comment type="function">
    <text evidence="1">Catalyzes the last two sequential reactions in the de novo biosynthetic pathway for UDP-N-acetylglucosamine (UDP-GlcNAc). The C-terminal domain catalyzes the transfer of acetyl group from acetyl coenzyme A to glucosamine-1-phosphate (GlcN-1-P) to produce N-acetylglucosamine-1-phosphate (GlcNAc-1-P), which is converted into UDP-GlcNAc by the transfer of uridine 5-monophosphate (from uridine 5-triphosphate), a reaction catalyzed by the N-terminal domain.</text>
</comment>
<comment type="catalytic activity">
    <reaction evidence="1">
        <text>alpha-D-glucosamine 1-phosphate + acetyl-CoA = N-acetyl-alpha-D-glucosamine 1-phosphate + CoA + H(+)</text>
        <dbReference type="Rhea" id="RHEA:13725"/>
        <dbReference type="ChEBI" id="CHEBI:15378"/>
        <dbReference type="ChEBI" id="CHEBI:57287"/>
        <dbReference type="ChEBI" id="CHEBI:57288"/>
        <dbReference type="ChEBI" id="CHEBI:57776"/>
        <dbReference type="ChEBI" id="CHEBI:58516"/>
        <dbReference type="EC" id="2.3.1.157"/>
    </reaction>
</comment>
<comment type="catalytic activity">
    <reaction evidence="1">
        <text>N-acetyl-alpha-D-glucosamine 1-phosphate + UTP + H(+) = UDP-N-acetyl-alpha-D-glucosamine + diphosphate</text>
        <dbReference type="Rhea" id="RHEA:13509"/>
        <dbReference type="ChEBI" id="CHEBI:15378"/>
        <dbReference type="ChEBI" id="CHEBI:33019"/>
        <dbReference type="ChEBI" id="CHEBI:46398"/>
        <dbReference type="ChEBI" id="CHEBI:57705"/>
        <dbReference type="ChEBI" id="CHEBI:57776"/>
        <dbReference type="EC" id="2.7.7.23"/>
    </reaction>
</comment>
<comment type="cofactor">
    <cofactor evidence="1">
        <name>Mg(2+)</name>
        <dbReference type="ChEBI" id="CHEBI:18420"/>
    </cofactor>
    <text evidence="1">Binds 1 Mg(2+) ion per subunit.</text>
</comment>
<comment type="pathway">
    <text evidence="1">Nucleotide-sugar biosynthesis; UDP-N-acetyl-alpha-D-glucosamine biosynthesis; N-acetyl-alpha-D-glucosamine 1-phosphate from alpha-D-glucosamine 6-phosphate (route II): step 2/2.</text>
</comment>
<comment type="pathway">
    <text evidence="1">Nucleotide-sugar biosynthesis; UDP-N-acetyl-alpha-D-glucosamine biosynthesis; UDP-N-acetyl-alpha-D-glucosamine from N-acetyl-alpha-D-glucosamine 1-phosphate: step 1/1.</text>
</comment>
<comment type="pathway">
    <text evidence="1">Bacterial outer membrane biogenesis; LPS lipid A biosynthesis.</text>
</comment>
<comment type="subunit">
    <text evidence="1">Homotrimer.</text>
</comment>
<comment type="subcellular location">
    <subcellularLocation>
        <location evidence="1">Cytoplasm</location>
    </subcellularLocation>
</comment>
<comment type="similarity">
    <text evidence="1">In the N-terminal section; belongs to the N-acetylglucosamine-1-phosphate uridyltransferase family.</text>
</comment>
<comment type="similarity">
    <text evidence="1">In the C-terminal section; belongs to the transferase hexapeptide repeat family.</text>
</comment>
<proteinExistence type="inferred from homology"/>
<protein>
    <recommendedName>
        <fullName evidence="1">Bifunctional protein GlmU</fullName>
    </recommendedName>
    <domain>
        <recommendedName>
            <fullName evidence="1">UDP-N-acetylglucosamine pyrophosphorylase</fullName>
            <ecNumber evidence="1">2.7.7.23</ecNumber>
        </recommendedName>
        <alternativeName>
            <fullName evidence="1">N-acetylglucosamine-1-phosphate uridyltransferase</fullName>
        </alternativeName>
    </domain>
    <domain>
        <recommendedName>
            <fullName evidence="1">Glucosamine-1-phosphate N-acetyltransferase</fullName>
            <ecNumber evidence="1">2.3.1.157</ecNumber>
        </recommendedName>
    </domain>
</protein>
<keyword id="KW-0012">Acyltransferase</keyword>
<keyword id="KW-0133">Cell shape</keyword>
<keyword id="KW-0961">Cell wall biogenesis/degradation</keyword>
<keyword id="KW-0963">Cytoplasm</keyword>
<keyword id="KW-0460">Magnesium</keyword>
<keyword id="KW-0479">Metal-binding</keyword>
<keyword id="KW-0511">Multifunctional enzyme</keyword>
<keyword id="KW-0548">Nucleotidyltransferase</keyword>
<keyword id="KW-0573">Peptidoglycan synthesis</keyword>
<keyword id="KW-0677">Repeat</keyword>
<keyword id="KW-0808">Transferase</keyword>
<feature type="chain" id="PRO_0000233835" description="Bifunctional protein GlmU">
    <location>
        <begin position="1"/>
        <end position="456"/>
    </location>
</feature>
<feature type="region of interest" description="Pyrophosphorylase" evidence="1">
    <location>
        <begin position="1"/>
        <end position="229"/>
    </location>
</feature>
<feature type="region of interest" description="Linker" evidence="1">
    <location>
        <begin position="230"/>
        <end position="250"/>
    </location>
</feature>
<feature type="region of interest" description="N-acetyltransferase" evidence="1">
    <location>
        <begin position="251"/>
        <end position="456"/>
    </location>
</feature>
<feature type="active site" description="Proton acceptor" evidence="1">
    <location>
        <position position="363"/>
    </location>
</feature>
<feature type="binding site" evidence="1">
    <location>
        <begin position="11"/>
        <end position="14"/>
    </location>
    <ligand>
        <name>UDP-N-acetyl-alpha-D-glucosamine</name>
        <dbReference type="ChEBI" id="CHEBI:57705"/>
    </ligand>
</feature>
<feature type="binding site" evidence="1">
    <location>
        <position position="25"/>
    </location>
    <ligand>
        <name>UDP-N-acetyl-alpha-D-glucosamine</name>
        <dbReference type="ChEBI" id="CHEBI:57705"/>
    </ligand>
</feature>
<feature type="binding site" evidence="1">
    <location>
        <position position="76"/>
    </location>
    <ligand>
        <name>UDP-N-acetyl-alpha-D-glucosamine</name>
        <dbReference type="ChEBI" id="CHEBI:57705"/>
    </ligand>
</feature>
<feature type="binding site" evidence="1">
    <location>
        <begin position="81"/>
        <end position="82"/>
    </location>
    <ligand>
        <name>UDP-N-acetyl-alpha-D-glucosamine</name>
        <dbReference type="ChEBI" id="CHEBI:57705"/>
    </ligand>
</feature>
<feature type="binding site" evidence="1">
    <location>
        <begin position="103"/>
        <end position="105"/>
    </location>
    <ligand>
        <name>UDP-N-acetyl-alpha-D-glucosamine</name>
        <dbReference type="ChEBI" id="CHEBI:57705"/>
    </ligand>
</feature>
<feature type="binding site" evidence="1">
    <location>
        <position position="105"/>
    </location>
    <ligand>
        <name>Mg(2+)</name>
        <dbReference type="ChEBI" id="CHEBI:18420"/>
    </ligand>
</feature>
<feature type="binding site" evidence="1">
    <location>
        <position position="140"/>
    </location>
    <ligand>
        <name>UDP-N-acetyl-alpha-D-glucosamine</name>
        <dbReference type="ChEBI" id="CHEBI:57705"/>
    </ligand>
</feature>
<feature type="binding site" evidence="1">
    <location>
        <position position="154"/>
    </location>
    <ligand>
        <name>UDP-N-acetyl-alpha-D-glucosamine</name>
        <dbReference type="ChEBI" id="CHEBI:57705"/>
    </ligand>
</feature>
<feature type="binding site" evidence="1">
    <location>
        <position position="169"/>
    </location>
    <ligand>
        <name>UDP-N-acetyl-alpha-D-glucosamine</name>
        <dbReference type="ChEBI" id="CHEBI:57705"/>
    </ligand>
</feature>
<feature type="binding site" evidence="1">
    <location>
        <position position="227"/>
    </location>
    <ligand>
        <name>Mg(2+)</name>
        <dbReference type="ChEBI" id="CHEBI:18420"/>
    </ligand>
</feature>
<feature type="binding site" evidence="1">
    <location>
        <position position="227"/>
    </location>
    <ligand>
        <name>UDP-N-acetyl-alpha-D-glucosamine</name>
        <dbReference type="ChEBI" id="CHEBI:57705"/>
    </ligand>
</feature>
<feature type="binding site" evidence="1">
    <location>
        <position position="333"/>
    </location>
    <ligand>
        <name>UDP-N-acetyl-alpha-D-glucosamine</name>
        <dbReference type="ChEBI" id="CHEBI:57705"/>
    </ligand>
</feature>
<feature type="binding site" evidence="1">
    <location>
        <position position="351"/>
    </location>
    <ligand>
        <name>UDP-N-acetyl-alpha-D-glucosamine</name>
        <dbReference type="ChEBI" id="CHEBI:57705"/>
    </ligand>
</feature>
<feature type="binding site" evidence="1">
    <location>
        <position position="366"/>
    </location>
    <ligand>
        <name>UDP-N-acetyl-alpha-D-glucosamine</name>
        <dbReference type="ChEBI" id="CHEBI:57705"/>
    </ligand>
</feature>
<feature type="binding site" evidence="1">
    <location>
        <position position="377"/>
    </location>
    <ligand>
        <name>UDP-N-acetyl-alpha-D-glucosamine</name>
        <dbReference type="ChEBI" id="CHEBI:57705"/>
    </ligand>
</feature>
<feature type="binding site" evidence="1">
    <location>
        <position position="380"/>
    </location>
    <ligand>
        <name>acetyl-CoA</name>
        <dbReference type="ChEBI" id="CHEBI:57288"/>
    </ligand>
</feature>
<feature type="binding site" evidence="1">
    <location>
        <begin position="386"/>
        <end position="387"/>
    </location>
    <ligand>
        <name>acetyl-CoA</name>
        <dbReference type="ChEBI" id="CHEBI:57288"/>
    </ligand>
</feature>
<feature type="binding site" evidence="1">
    <location>
        <position position="405"/>
    </location>
    <ligand>
        <name>acetyl-CoA</name>
        <dbReference type="ChEBI" id="CHEBI:57288"/>
    </ligand>
</feature>
<feature type="binding site" evidence="1">
    <location>
        <position position="423"/>
    </location>
    <ligand>
        <name>acetyl-CoA</name>
        <dbReference type="ChEBI" id="CHEBI:57288"/>
    </ligand>
</feature>
<feature type="binding site" evidence="1">
    <location>
        <position position="440"/>
    </location>
    <ligand>
        <name>acetyl-CoA</name>
        <dbReference type="ChEBI" id="CHEBI:57288"/>
    </ligand>
</feature>
<evidence type="ECO:0000255" key="1">
    <source>
        <dbReference type="HAMAP-Rule" id="MF_01631"/>
    </source>
</evidence>
<accession>Q57HY1</accession>
<organism>
    <name type="scientific">Salmonella choleraesuis (strain SC-B67)</name>
    <dbReference type="NCBI Taxonomy" id="321314"/>
    <lineage>
        <taxon>Bacteria</taxon>
        <taxon>Pseudomonadati</taxon>
        <taxon>Pseudomonadota</taxon>
        <taxon>Gammaproteobacteria</taxon>
        <taxon>Enterobacterales</taxon>
        <taxon>Enterobacteriaceae</taxon>
        <taxon>Salmonella</taxon>
    </lineage>
</organism>
<gene>
    <name evidence="1" type="primary">glmU</name>
    <name type="ordered locus">SCH_3775</name>
</gene>
<dbReference type="EC" id="2.7.7.23" evidence="1"/>
<dbReference type="EC" id="2.3.1.157" evidence="1"/>
<dbReference type="EMBL" id="AE017220">
    <property type="protein sequence ID" value="AAX67681.1"/>
    <property type="molecule type" value="Genomic_DNA"/>
</dbReference>
<dbReference type="RefSeq" id="WP_011264426.1">
    <property type="nucleotide sequence ID" value="NC_006905.1"/>
</dbReference>
<dbReference type="SMR" id="Q57HY1"/>
<dbReference type="KEGG" id="sec:SCH_3775"/>
<dbReference type="HOGENOM" id="CLU_029499_15_2_6"/>
<dbReference type="UniPathway" id="UPA00113">
    <property type="reaction ID" value="UER00532"/>
</dbReference>
<dbReference type="UniPathway" id="UPA00113">
    <property type="reaction ID" value="UER00533"/>
</dbReference>
<dbReference type="UniPathway" id="UPA00973"/>
<dbReference type="Proteomes" id="UP000000538">
    <property type="component" value="Chromosome"/>
</dbReference>
<dbReference type="GO" id="GO:0005737">
    <property type="term" value="C:cytoplasm"/>
    <property type="evidence" value="ECO:0007669"/>
    <property type="project" value="UniProtKB-SubCell"/>
</dbReference>
<dbReference type="GO" id="GO:0016020">
    <property type="term" value="C:membrane"/>
    <property type="evidence" value="ECO:0007669"/>
    <property type="project" value="GOC"/>
</dbReference>
<dbReference type="GO" id="GO:0019134">
    <property type="term" value="F:glucosamine-1-phosphate N-acetyltransferase activity"/>
    <property type="evidence" value="ECO:0007669"/>
    <property type="project" value="UniProtKB-UniRule"/>
</dbReference>
<dbReference type="GO" id="GO:0000287">
    <property type="term" value="F:magnesium ion binding"/>
    <property type="evidence" value="ECO:0007669"/>
    <property type="project" value="UniProtKB-UniRule"/>
</dbReference>
<dbReference type="GO" id="GO:0003977">
    <property type="term" value="F:UDP-N-acetylglucosamine diphosphorylase activity"/>
    <property type="evidence" value="ECO:0007669"/>
    <property type="project" value="UniProtKB-UniRule"/>
</dbReference>
<dbReference type="GO" id="GO:0000902">
    <property type="term" value="P:cell morphogenesis"/>
    <property type="evidence" value="ECO:0007669"/>
    <property type="project" value="UniProtKB-UniRule"/>
</dbReference>
<dbReference type="GO" id="GO:0071555">
    <property type="term" value="P:cell wall organization"/>
    <property type="evidence" value="ECO:0007669"/>
    <property type="project" value="UniProtKB-KW"/>
</dbReference>
<dbReference type="GO" id="GO:0009245">
    <property type="term" value="P:lipid A biosynthetic process"/>
    <property type="evidence" value="ECO:0007669"/>
    <property type="project" value="UniProtKB-UniRule"/>
</dbReference>
<dbReference type="GO" id="GO:0009252">
    <property type="term" value="P:peptidoglycan biosynthetic process"/>
    <property type="evidence" value="ECO:0007669"/>
    <property type="project" value="UniProtKB-UniRule"/>
</dbReference>
<dbReference type="GO" id="GO:0008360">
    <property type="term" value="P:regulation of cell shape"/>
    <property type="evidence" value="ECO:0007669"/>
    <property type="project" value="UniProtKB-KW"/>
</dbReference>
<dbReference type="GO" id="GO:0006048">
    <property type="term" value="P:UDP-N-acetylglucosamine biosynthetic process"/>
    <property type="evidence" value="ECO:0007669"/>
    <property type="project" value="UniProtKB-UniPathway"/>
</dbReference>
<dbReference type="CDD" id="cd02540">
    <property type="entry name" value="GT2_GlmU_N_bac"/>
    <property type="match status" value="1"/>
</dbReference>
<dbReference type="CDD" id="cd03353">
    <property type="entry name" value="LbH_GlmU_C"/>
    <property type="match status" value="1"/>
</dbReference>
<dbReference type="FunFam" id="2.160.10.10:FF:000011">
    <property type="entry name" value="Bifunctional protein GlmU"/>
    <property type="match status" value="1"/>
</dbReference>
<dbReference type="FunFam" id="3.90.550.10:FF:000006">
    <property type="entry name" value="Bifunctional protein GlmU"/>
    <property type="match status" value="1"/>
</dbReference>
<dbReference type="Gene3D" id="2.160.10.10">
    <property type="entry name" value="Hexapeptide repeat proteins"/>
    <property type="match status" value="1"/>
</dbReference>
<dbReference type="Gene3D" id="3.90.550.10">
    <property type="entry name" value="Spore Coat Polysaccharide Biosynthesis Protein SpsA, Chain A"/>
    <property type="match status" value="1"/>
</dbReference>
<dbReference type="HAMAP" id="MF_01631">
    <property type="entry name" value="GlmU"/>
    <property type="match status" value="1"/>
</dbReference>
<dbReference type="InterPro" id="IPR005882">
    <property type="entry name" value="Bifunctional_GlmU"/>
</dbReference>
<dbReference type="InterPro" id="IPR050065">
    <property type="entry name" value="GlmU-like"/>
</dbReference>
<dbReference type="InterPro" id="IPR038009">
    <property type="entry name" value="GlmU_C_LbH"/>
</dbReference>
<dbReference type="InterPro" id="IPR001451">
    <property type="entry name" value="Hexapep"/>
</dbReference>
<dbReference type="InterPro" id="IPR018357">
    <property type="entry name" value="Hexapep_transf_CS"/>
</dbReference>
<dbReference type="InterPro" id="IPR025877">
    <property type="entry name" value="MobA-like_NTP_Trfase"/>
</dbReference>
<dbReference type="InterPro" id="IPR029044">
    <property type="entry name" value="Nucleotide-diphossugar_trans"/>
</dbReference>
<dbReference type="InterPro" id="IPR011004">
    <property type="entry name" value="Trimer_LpxA-like_sf"/>
</dbReference>
<dbReference type="NCBIfam" id="TIGR01173">
    <property type="entry name" value="glmU"/>
    <property type="match status" value="1"/>
</dbReference>
<dbReference type="NCBIfam" id="NF006986">
    <property type="entry name" value="PRK09451.1"/>
    <property type="match status" value="1"/>
</dbReference>
<dbReference type="PANTHER" id="PTHR43584:SF3">
    <property type="entry name" value="BIFUNCTIONAL PROTEIN GLMU"/>
    <property type="match status" value="1"/>
</dbReference>
<dbReference type="PANTHER" id="PTHR43584">
    <property type="entry name" value="NUCLEOTIDYL TRANSFERASE"/>
    <property type="match status" value="1"/>
</dbReference>
<dbReference type="Pfam" id="PF00132">
    <property type="entry name" value="Hexapep"/>
    <property type="match status" value="1"/>
</dbReference>
<dbReference type="Pfam" id="PF12804">
    <property type="entry name" value="NTP_transf_3"/>
    <property type="match status" value="1"/>
</dbReference>
<dbReference type="SUPFAM" id="SSF53448">
    <property type="entry name" value="Nucleotide-diphospho-sugar transferases"/>
    <property type="match status" value="1"/>
</dbReference>
<dbReference type="SUPFAM" id="SSF51161">
    <property type="entry name" value="Trimeric LpxA-like enzymes"/>
    <property type="match status" value="1"/>
</dbReference>
<dbReference type="PROSITE" id="PS00101">
    <property type="entry name" value="HEXAPEP_TRANSFERASES"/>
    <property type="match status" value="1"/>
</dbReference>
<reference key="1">
    <citation type="journal article" date="2005" name="Nucleic Acids Res.">
        <title>The genome sequence of Salmonella enterica serovar Choleraesuis, a highly invasive and resistant zoonotic pathogen.</title>
        <authorList>
            <person name="Chiu C.-H."/>
            <person name="Tang P."/>
            <person name="Chu C."/>
            <person name="Hu S."/>
            <person name="Bao Q."/>
            <person name="Yu J."/>
            <person name="Chou Y.-Y."/>
            <person name="Wang H.-S."/>
            <person name="Lee Y.-S."/>
        </authorList>
    </citation>
    <scope>NUCLEOTIDE SEQUENCE [LARGE SCALE GENOMIC DNA]</scope>
    <source>
        <strain>SC-B67</strain>
    </source>
</reference>
<sequence>MLNSAMSVVILAAGKGTRMYSDIPKVLHTLAGKPMVQHVIDAATKLGAAQVHLVYGHGGELLKQTLKDDKLNWVLQAEQLGTGHAMQQAAPFFSDDEDILMLYGDVPLISVETLQRLRDAKPQGGIGLLTVKLDDPSGYGRITRENGKVTGIVEHKDATDEQRQIQEINTGILIANGADLKRWLSKMTNNNAQGEYYITDIIALAYQEGREIAAVHPARISETDGVNNRLQLSRLERIYQAEQAEKLLLSGVMLRDPARFDLRGTLHCGMDVEIDANVIIEGYVTLGHRVKIGAGCIIKNSVIGDDCEISPYSVVEDAHLEAACTIGPFARLRPGAELLAGAHVGNFVEMKKARLGKGSKAGHLTYLGDAEIGDNVNIGAGTITCNYDGANKFKTVIGDDVFVGSDTQLVAPVTVGKGATIAAGTTVTRNVADNELVLSRVPQVHKQGWQRPVKKK</sequence>